<name>Y1099_RICFE</name>
<keyword id="KW-0040">ANK repeat</keyword>
<keyword id="KW-0175">Coiled coil</keyword>
<keyword id="KW-0677">Repeat</keyword>
<gene>
    <name type="ordered locus">RF_1099</name>
</gene>
<feature type="chain" id="PRO_0000281760" description="Putative ankyrin repeat protein RF_1099">
    <location>
        <begin position="1"/>
        <end position="267"/>
    </location>
</feature>
<feature type="repeat" description="ANK 1">
    <location>
        <begin position="46"/>
        <end position="75"/>
    </location>
</feature>
<feature type="repeat" description="ANK 2">
    <location>
        <begin position="78"/>
        <end position="107"/>
    </location>
</feature>
<feature type="repeat" description="ANK 3">
    <location>
        <begin position="136"/>
        <end position="165"/>
    </location>
</feature>
<feature type="repeat" description="ANK 4">
    <location>
        <begin position="170"/>
        <end position="199"/>
    </location>
</feature>
<feature type="coiled-coil region" evidence="1">
    <location>
        <begin position="238"/>
        <end position="265"/>
    </location>
</feature>
<proteinExistence type="predicted"/>
<sequence length="267" mass="30258">MKIIQVILKFIIIFIIPSIHAQECKLEFKTEKIHVNGVTYDQKVGDPITPIADAIKADNLEEVKKILDEGYGVNQPCLGWVPLDYAISNNNIKIADFLLKRDASMSLIHINIGFMKSEIAEFLINQGMSPNLRYEDGITGMMLAAERNNPDLIKLLLKLGVNPNVQNSKTGMTSLMYAASYLNVEVVRVLLEQGVDPNIKDFKGKRALNWIAVDANRKLHASDGEYYAALFLAPFETKQKIIKERNSIKTRNKEKEKEIKKLFNSHR</sequence>
<protein>
    <recommendedName>
        <fullName>Putative ankyrin repeat protein RF_1099</fullName>
    </recommendedName>
</protein>
<organism>
    <name type="scientific">Rickettsia felis (strain ATCC VR-1525 / URRWXCal2)</name>
    <name type="common">Rickettsia azadi</name>
    <dbReference type="NCBI Taxonomy" id="315456"/>
    <lineage>
        <taxon>Bacteria</taxon>
        <taxon>Pseudomonadati</taxon>
        <taxon>Pseudomonadota</taxon>
        <taxon>Alphaproteobacteria</taxon>
        <taxon>Rickettsiales</taxon>
        <taxon>Rickettsiaceae</taxon>
        <taxon>Rickettsieae</taxon>
        <taxon>Rickettsia</taxon>
        <taxon>spotted fever group</taxon>
    </lineage>
</organism>
<evidence type="ECO:0000255" key="1"/>
<reference key="1">
    <citation type="journal article" date="2005" name="PLoS Biol.">
        <title>The genome sequence of Rickettsia felis identifies the first putative conjugative plasmid in an obligate intracellular parasite.</title>
        <authorList>
            <person name="Ogata H."/>
            <person name="Renesto P."/>
            <person name="Audic S."/>
            <person name="Robert C."/>
            <person name="Blanc G."/>
            <person name="Fournier P.-E."/>
            <person name="Parinello H."/>
            <person name="Claverie J.-M."/>
            <person name="Raoult D."/>
        </authorList>
    </citation>
    <scope>NUCLEOTIDE SEQUENCE [LARGE SCALE GENOMIC DNA]</scope>
    <source>
        <strain>ATCC VR-1525 / URRWXCal2</strain>
    </source>
</reference>
<accession>Q4UKI1</accession>
<dbReference type="EMBL" id="CP000053">
    <property type="protein sequence ID" value="AAY61950.1"/>
    <property type="molecule type" value="Genomic_DNA"/>
</dbReference>
<dbReference type="SMR" id="Q4UKI1"/>
<dbReference type="STRING" id="315456.RF_1099"/>
<dbReference type="KEGG" id="rfe:RF_1099"/>
<dbReference type="eggNOG" id="COG0666">
    <property type="taxonomic scope" value="Bacteria"/>
</dbReference>
<dbReference type="HOGENOM" id="CLU_1041618_0_0_5"/>
<dbReference type="Proteomes" id="UP000008548">
    <property type="component" value="Chromosome"/>
</dbReference>
<dbReference type="GO" id="GO:0045732">
    <property type="term" value="P:positive regulation of protein catabolic process"/>
    <property type="evidence" value="ECO:0007669"/>
    <property type="project" value="TreeGrafter"/>
</dbReference>
<dbReference type="GO" id="GO:0016567">
    <property type="term" value="P:protein ubiquitination"/>
    <property type="evidence" value="ECO:0007669"/>
    <property type="project" value="TreeGrafter"/>
</dbReference>
<dbReference type="Gene3D" id="1.25.40.20">
    <property type="entry name" value="Ankyrin repeat-containing domain"/>
    <property type="match status" value="2"/>
</dbReference>
<dbReference type="InterPro" id="IPR051573">
    <property type="entry name" value="Ankyrin-SOCS_box_domain"/>
</dbReference>
<dbReference type="InterPro" id="IPR002110">
    <property type="entry name" value="Ankyrin_rpt"/>
</dbReference>
<dbReference type="InterPro" id="IPR036770">
    <property type="entry name" value="Ankyrin_rpt-contain_sf"/>
</dbReference>
<dbReference type="PANTHER" id="PTHR24136:SF15">
    <property type="entry name" value="ANK_REP_REGION DOMAIN-CONTAINING PROTEIN"/>
    <property type="match status" value="1"/>
</dbReference>
<dbReference type="PANTHER" id="PTHR24136">
    <property type="entry name" value="SOWAH (DROSOPHILA) HOMOLOG"/>
    <property type="match status" value="1"/>
</dbReference>
<dbReference type="Pfam" id="PF12796">
    <property type="entry name" value="Ank_2"/>
    <property type="match status" value="2"/>
</dbReference>
<dbReference type="SMART" id="SM00248">
    <property type="entry name" value="ANK"/>
    <property type="match status" value="4"/>
</dbReference>
<dbReference type="SUPFAM" id="SSF48403">
    <property type="entry name" value="Ankyrin repeat"/>
    <property type="match status" value="1"/>
</dbReference>
<dbReference type="PROSITE" id="PS50297">
    <property type="entry name" value="ANK_REP_REGION"/>
    <property type="match status" value="1"/>
</dbReference>
<dbReference type="PROSITE" id="PS50088">
    <property type="entry name" value="ANK_REPEAT"/>
    <property type="match status" value="2"/>
</dbReference>